<keyword id="KW-0007">Acetylation</keyword>
<keyword id="KW-0010">Activator</keyword>
<keyword id="KW-0238">DNA-binding</keyword>
<keyword id="KW-0539">Nucleus</keyword>
<keyword id="KW-0597">Phosphoprotein</keyword>
<keyword id="KW-1185">Reference proteome</keyword>
<keyword id="KW-0804">Transcription</keyword>
<keyword id="KW-0805">Transcription regulation</keyword>
<proteinExistence type="evidence at protein level"/>
<feature type="initiator methionine" description="Removed" evidence="2">
    <location>
        <position position="1"/>
    </location>
</feature>
<feature type="chain" id="PRO_0000419167" description="DNA-binding protein Rfx5">
    <location>
        <begin position="2"/>
        <end position="658"/>
    </location>
</feature>
<feature type="DNA-binding region" description="RFX-type winged-helix" evidence="3">
    <location>
        <begin position="91"/>
        <end position="167"/>
    </location>
</feature>
<feature type="region of interest" description="Disordered" evidence="4">
    <location>
        <begin position="1"/>
        <end position="28"/>
    </location>
</feature>
<feature type="region of interest" description="N-terminal domain" evidence="1">
    <location>
        <begin position="24"/>
        <end position="89"/>
    </location>
</feature>
<feature type="region of interest" description="Leucine-rich region; critical for dimer formation and for interaction with RFXAP" evidence="1">
    <location>
        <begin position="61"/>
        <end position="65"/>
    </location>
</feature>
<feature type="region of interest" description="Disordered" evidence="4">
    <location>
        <begin position="250"/>
        <end position="315"/>
    </location>
</feature>
<feature type="region of interest" description="Disordered" evidence="4">
    <location>
        <begin position="382"/>
        <end position="422"/>
    </location>
</feature>
<feature type="region of interest" description="Disordered" evidence="4">
    <location>
        <begin position="443"/>
        <end position="602"/>
    </location>
</feature>
<feature type="region of interest" description="Disordered" evidence="4">
    <location>
        <begin position="624"/>
        <end position="658"/>
    </location>
</feature>
<feature type="short sequence motif" description="PxLPxI/L motif; mediates interaction with RFXANK" evidence="2">
    <location>
        <begin position="172"/>
        <end position="177"/>
    </location>
</feature>
<feature type="compositionally biased region" description="Basic and acidic residues" evidence="4">
    <location>
        <begin position="1"/>
        <end position="10"/>
    </location>
</feature>
<feature type="compositionally biased region" description="Basic and acidic residues" evidence="4">
    <location>
        <begin position="277"/>
        <end position="309"/>
    </location>
</feature>
<feature type="compositionally biased region" description="Gly residues" evidence="4">
    <location>
        <begin position="382"/>
        <end position="398"/>
    </location>
</feature>
<feature type="compositionally biased region" description="Gly residues" evidence="4">
    <location>
        <begin position="406"/>
        <end position="422"/>
    </location>
</feature>
<feature type="compositionally biased region" description="Basic and acidic residues" evidence="4">
    <location>
        <begin position="465"/>
        <end position="476"/>
    </location>
</feature>
<feature type="compositionally biased region" description="Basic and acidic residues" evidence="4">
    <location>
        <begin position="489"/>
        <end position="498"/>
    </location>
</feature>
<feature type="compositionally biased region" description="Basic residues" evidence="4">
    <location>
        <begin position="506"/>
        <end position="516"/>
    </location>
</feature>
<feature type="compositionally biased region" description="Basic and acidic residues" evidence="4">
    <location>
        <begin position="648"/>
        <end position="658"/>
    </location>
</feature>
<feature type="modified residue" description="N-acetylalanine" evidence="2">
    <location>
        <position position="2"/>
    </location>
</feature>
<feature type="modified residue" description="Phosphoserine" evidence="2">
    <location>
        <position position="10"/>
    </location>
</feature>
<feature type="modified residue" description="Phosphoserine" evidence="2">
    <location>
        <position position="184"/>
    </location>
</feature>
<feature type="sequence conflict" description="In Ref. 1; AAF68260 and 4; AAI18949/AAI18950." evidence="6" ref="1 4">
    <original>R</original>
    <variation>Q</variation>
    <location>
        <position position="569"/>
    </location>
</feature>
<dbReference type="EMBL" id="AF209854">
    <property type="protein sequence ID" value="AAF68260.1"/>
    <property type="molecule type" value="mRNA"/>
</dbReference>
<dbReference type="EMBL" id="AC087062">
    <property type="status" value="NOT_ANNOTATED_CDS"/>
    <property type="molecule type" value="Genomic_DNA"/>
</dbReference>
<dbReference type="EMBL" id="CH466620">
    <property type="protein sequence ID" value="EDL38756.1"/>
    <property type="molecule type" value="Genomic_DNA"/>
</dbReference>
<dbReference type="EMBL" id="BC118948">
    <property type="protein sequence ID" value="AAI18949.1"/>
    <property type="molecule type" value="mRNA"/>
</dbReference>
<dbReference type="EMBL" id="BC118949">
    <property type="protein sequence ID" value="AAI18950.1"/>
    <property type="molecule type" value="mRNA"/>
</dbReference>
<dbReference type="EMBL" id="AK156195">
    <property type="protein sequence ID" value="BAE33620.1"/>
    <property type="molecule type" value="mRNA"/>
</dbReference>
<dbReference type="CCDS" id="CCDS17598.1"/>
<dbReference type="RefSeq" id="NP_001342634.1">
    <property type="nucleotide sequence ID" value="NM_001355705.2"/>
</dbReference>
<dbReference type="RefSeq" id="NP_001397578.1">
    <property type="nucleotide sequence ID" value="NM_001410649.1"/>
</dbReference>
<dbReference type="RefSeq" id="NP_001397579.1">
    <property type="nucleotide sequence ID" value="NM_001410650.1"/>
</dbReference>
<dbReference type="RefSeq" id="NP_001397580.1">
    <property type="nucleotide sequence ID" value="NM_001410651.1"/>
</dbReference>
<dbReference type="RefSeq" id="NP_059091.2">
    <property type="nucleotide sequence ID" value="NM_017395.4"/>
</dbReference>
<dbReference type="RefSeq" id="XP_006501757.1">
    <property type="nucleotide sequence ID" value="XM_006501694.3"/>
</dbReference>
<dbReference type="RefSeq" id="XP_006501758.1">
    <property type="nucleotide sequence ID" value="XM_006501695.3"/>
</dbReference>
<dbReference type="RefSeq" id="XP_011238466.1">
    <property type="nucleotide sequence ID" value="XM_011240164.4"/>
</dbReference>
<dbReference type="RefSeq" id="XP_017175140.1">
    <property type="nucleotide sequence ID" value="XM_017319651.1"/>
</dbReference>
<dbReference type="SMR" id="Q9JL61"/>
<dbReference type="BioGRID" id="207542">
    <property type="interactions" value="8"/>
</dbReference>
<dbReference type="FunCoup" id="Q9JL61">
    <property type="interactions" value="3298"/>
</dbReference>
<dbReference type="IntAct" id="Q9JL61">
    <property type="interactions" value="8"/>
</dbReference>
<dbReference type="STRING" id="10090.ENSMUSP00000117963"/>
<dbReference type="iPTMnet" id="Q9JL61"/>
<dbReference type="PhosphoSitePlus" id="Q9JL61"/>
<dbReference type="PaxDb" id="10090-ENSMUSP00000117963"/>
<dbReference type="PeptideAtlas" id="Q9JL61"/>
<dbReference type="ProteomicsDB" id="255189"/>
<dbReference type="Pumba" id="Q9JL61"/>
<dbReference type="Antibodypedia" id="683">
    <property type="antibodies" value="297 antibodies from 33 providers"/>
</dbReference>
<dbReference type="DNASU" id="53970"/>
<dbReference type="Ensembl" id="ENSMUST00000029772.3">
    <property type="protein sequence ID" value="ENSMUSP00000029772.3"/>
    <property type="gene ID" value="ENSMUSG00000005774.13"/>
</dbReference>
<dbReference type="Ensembl" id="ENSMUST00000107255.8">
    <property type="protein sequence ID" value="ENSMUSP00000102876.2"/>
    <property type="gene ID" value="ENSMUSG00000005774.13"/>
</dbReference>
<dbReference type="Ensembl" id="ENSMUST00000107260.9">
    <property type="protein sequence ID" value="ENSMUSP00000102881.3"/>
    <property type="gene ID" value="ENSMUSG00000005774.13"/>
</dbReference>
<dbReference type="Ensembl" id="ENSMUST00000137088.8">
    <property type="protein sequence ID" value="ENSMUSP00000117963.2"/>
    <property type="gene ID" value="ENSMUSG00000005774.13"/>
</dbReference>
<dbReference type="GeneID" id="53970"/>
<dbReference type="KEGG" id="mmu:53970"/>
<dbReference type="UCSC" id="uc008qhg.1">
    <property type="organism name" value="mouse"/>
</dbReference>
<dbReference type="AGR" id="MGI:1858421"/>
<dbReference type="CTD" id="5993"/>
<dbReference type="MGI" id="MGI:1858421">
    <property type="gene designation" value="Rfx5"/>
</dbReference>
<dbReference type="VEuPathDB" id="HostDB:ENSMUSG00000005774"/>
<dbReference type="eggNOG" id="KOG3712">
    <property type="taxonomic scope" value="Eukaryota"/>
</dbReference>
<dbReference type="GeneTree" id="ENSGT01050000244970"/>
<dbReference type="HOGENOM" id="CLU_030500_0_0_1"/>
<dbReference type="InParanoid" id="Q9JL61"/>
<dbReference type="OMA" id="QMHACTW"/>
<dbReference type="OrthoDB" id="10069709at2759"/>
<dbReference type="PhylomeDB" id="Q9JL61"/>
<dbReference type="TreeFam" id="TF321340"/>
<dbReference type="BioGRID-ORCS" id="53970">
    <property type="hits" value="4 hits in 78 CRISPR screens"/>
</dbReference>
<dbReference type="ChiTaRS" id="Rfx5">
    <property type="organism name" value="mouse"/>
</dbReference>
<dbReference type="PRO" id="PR:Q9JL61"/>
<dbReference type="Proteomes" id="UP000000589">
    <property type="component" value="Chromosome 3"/>
</dbReference>
<dbReference type="RNAct" id="Q9JL61">
    <property type="molecule type" value="protein"/>
</dbReference>
<dbReference type="Bgee" id="ENSMUSG00000005774">
    <property type="expression patterns" value="Expressed in vestibular ganglion and 239 other cell types or tissues"/>
</dbReference>
<dbReference type="ExpressionAtlas" id="Q9JL61">
    <property type="expression patterns" value="baseline and differential"/>
</dbReference>
<dbReference type="GO" id="GO:0005654">
    <property type="term" value="C:nucleoplasm"/>
    <property type="evidence" value="ECO:0007669"/>
    <property type="project" value="Ensembl"/>
</dbReference>
<dbReference type="GO" id="GO:0090575">
    <property type="term" value="C:RNA polymerase II transcription regulator complex"/>
    <property type="evidence" value="ECO:0007669"/>
    <property type="project" value="Ensembl"/>
</dbReference>
<dbReference type="GO" id="GO:0001228">
    <property type="term" value="F:DNA-binding transcription activator activity, RNA polymerase II-specific"/>
    <property type="evidence" value="ECO:0007669"/>
    <property type="project" value="Ensembl"/>
</dbReference>
<dbReference type="GO" id="GO:0000977">
    <property type="term" value="F:RNA polymerase II transcription regulatory region sequence-specific DNA binding"/>
    <property type="evidence" value="ECO:0007669"/>
    <property type="project" value="Ensembl"/>
</dbReference>
<dbReference type="GO" id="GO:0000122">
    <property type="term" value="P:negative regulation of transcription by RNA polymerase II"/>
    <property type="evidence" value="ECO:0000315"/>
    <property type="project" value="MGI"/>
</dbReference>
<dbReference type="FunFam" id="1.10.10.10:FF:000128">
    <property type="entry name" value="DNA-binding protein RFX5 isoform X1"/>
    <property type="match status" value="1"/>
</dbReference>
<dbReference type="Gene3D" id="6.10.140.1290">
    <property type="match status" value="1"/>
</dbReference>
<dbReference type="Gene3D" id="1.10.10.10">
    <property type="entry name" value="Winged helix-like DNA-binding domain superfamily/Winged helix DNA-binding domain"/>
    <property type="match status" value="1"/>
</dbReference>
<dbReference type="InterPro" id="IPR003150">
    <property type="entry name" value="DNA-bd_RFX"/>
</dbReference>
<dbReference type="InterPro" id="IPR039779">
    <property type="entry name" value="RFX-like"/>
</dbReference>
<dbReference type="InterPro" id="IPR029298">
    <property type="entry name" value="RFX5_C"/>
</dbReference>
<dbReference type="InterPro" id="IPR036388">
    <property type="entry name" value="WH-like_DNA-bd_sf"/>
</dbReference>
<dbReference type="InterPro" id="IPR036390">
    <property type="entry name" value="WH_DNA-bd_sf"/>
</dbReference>
<dbReference type="PANTHER" id="PTHR12619:SF18">
    <property type="entry name" value="DNA-BINDING PROTEIN RFX5"/>
    <property type="match status" value="1"/>
</dbReference>
<dbReference type="PANTHER" id="PTHR12619">
    <property type="entry name" value="RFX TRANSCRIPTION FACTOR FAMILY"/>
    <property type="match status" value="1"/>
</dbReference>
<dbReference type="Pfam" id="PF14621">
    <property type="entry name" value="RFX5_DNA_bdg"/>
    <property type="match status" value="1"/>
</dbReference>
<dbReference type="Pfam" id="PF18326">
    <property type="entry name" value="RFX5_N"/>
    <property type="match status" value="1"/>
</dbReference>
<dbReference type="Pfam" id="PF02257">
    <property type="entry name" value="RFX_DNA_binding"/>
    <property type="match status" value="1"/>
</dbReference>
<dbReference type="SMART" id="SM01306">
    <property type="entry name" value="RFX5_DNA_bdg"/>
    <property type="match status" value="1"/>
</dbReference>
<dbReference type="SUPFAM" id="SSF46785">
    <property type="entry name" value="Winged helix' DNA-binding domain"/>
    <property type="match status" value="1"/>
</dbReference>
<dbReference type="PROSITE" id="PS51526">
    <property type="entry name" value="RFX_DBD"/>
    <property type="match status" value="1"/>
</dbReference>
<protein>
    <recommendedName>
        <fullName>DNA-binding protein Rfx5</fullName>
    </recommendedName>
    <alternativeName>
        <fullName>Regulatory factor X 5</fullName>
    </alternativeName>
</protein>
<organism>
    <name type="scientific">Mus musculus</name>
    <name type="common">Mouse</name>
    <dbReference type="NCBI Taxonomy" id="10090"/>
    <lineage>
        <taxon>Eukaryota</taxon>
        <taxon>Metazoa</taxon>
        <taxon>Chordata</taxon>
        <taxon>Craniata</taxon>
        <taxon>Vertebrata</taxon>
        <taxon>Euteleostomi</taxon>
        <taxon>Mammalia</taxon>
        <taxon>Eutheria</taxon>
        <taxon>Euarchontoglires</taxon>
        <taxon>Glires</taxon>
        <taxon>Rodentia</taxon>
        <taxon>Myomorpha</taxon>
        <taxon>Muroidea</taxon>
        <taxon>Muridae</taxon>
        <taxon>Murinae</taxon>
        <taxon>Mus</taxon>
        <taxon>Mus</taxon>
    </lineage>
</organism>
<accession>Q9JL61</accession>
<accession>D3Z1N0</accession>
<accession>G3X9S6</accession>
<accession>Q3U180</accession>
<name>RFX5_MOUSE</name>
<sequence>MAEDKPDAKSPKTGARPQGGADAGEPTTLLQRLRGTISKAVQNKVEGILQEVQKFSDNDKLYLYLQLPSGPSVGEKSSEPSLLSNEEYMYAYRWIRNHLEEHMDTCLPKQSVYDAYRKYCESLACCRPLSTANFGKIIREIFPDIKARRLGGRGQSKYCYSGIRRKTLVSMPPLPGLDLKGSESPEMGPEVSPAPRDELVEAACALTCDWAERILKRSFSSIVQVARYLLQQHLISARSAHAHVLKAGGLAEEDERAPRERSLCKSKNVVESLEGGGPKKPERPAQPPKEQEARAGTDLPGRAERKKSVIDSSVPAASKPQVNALVARLPVLLPRAPRSLITPISGTLKVATLPLPTRVGGPQTAVPIINMILPPVPTLSGAGPGPGPGLGPRFGPGPGLGPGPGPGLGAGLGPGLGPGLGAGPGPGLGAGLGAGLGLGPGRVPPRAPILPRGAENREVGISSDPRPHDKGIKRTAEVPLSEASGQDPPVKEMKHETQDTTVSEAKRKRGRPRKKPGGSGERNATPEKSAAIVNSPRSPRLLWETWGSKRENNFIGRPEGPGPGGEAERETVLVQGQQDGAVSKGERSLSSQEAKEAEDKIPPVTSKVSVIKGRIQKEALQLVKGEADAATQGNKGLKGRVLQSSLTPEHKDPKATPP</sequence>
<gene>
    <name type="primary">Rfx5</name>
</gene>
<comment type="function">
    <text evidence="5">Activates transcription from class II MHC promoters. Recognizes X-boxes. Mediates cooperative binding between RFX and NF-Y. RFX binds the X1 box of MHC-II promoters.</text>
</comment>
<comment type="subunit">
    <text evidence="2 5">Homodimer. The RFX heterotetrameric complex consists of 2 molecules of RFX5 and one each of RFXAP and RFX-B/RFXANK; with each subunit representing a separate complementation group (PubMed:10779326). Interacts (via PxLPxI/L motif) with RFXANK (via ankyrin repeats); the interaction is direct (By similarity). RFX forms cooperative DNA binding complexes with X2BP and CBF/NF-Y. RFX associates with CIITA to form an active transcriptional complex (PubMed:10779326).</text>
</comment>
<comment type="subcellular location">
    <subcellularLocation>
        <location evidence="3 5">Nucleus</location>
    </subcellularLocation>
</comment>
<comment type="domain">
    <text>The N-terminus is required for dimer formation, association with RFXANK and RFXAP, assembly of the RFX complex, and for binding of this complex to its X box target site in the MHC-II promoter. The C-terminus mediates cooperative binding between the RFX complex and NF-Y.</text>
</comment>
<comment type="domain">
    <text evidence="2">The PxLPxI/L motif mediates interaction with ankyrin repeats of RFXANK.</text>
</comment>
<comment type="PTM">
    <text evidence="1">Phosphorylated.</text>
</comment>
<comment type="similarity">
    <text evidence="3">Belongs to the RFX family.</text>
</comment>
<evidence type="ECO:0000250" key="1"/>
<evidence type="ECO:0000250" key="2">
    <source>
        <dbReference type="UniProtKB" id="P48382"/>
    </source>
</evidence>
<evidence type="ECO:0000255" key="3">
    <source>
        <dbReference type="PROSITE-ProRule" id="PRU00858"/>
    </source>
</evidence>
<evidence type="ECO:0000256" key="4">
    <source>
        <dbReference type="SAM" id="MobiDB-lite"/>
    </source>
</evidence>
<evidence type="ECO:0000269" key="5">
    <source>
    </source>
</evidence>
<evidence type="ECO:0000305" key="6"/>
<reference key="1">
    <citation type="journal article" date="2000" name="Mol. Cell. Biol.">
        <title>A functionally essential domain of RFX5 mediates activation of major histocompatibility complex class II promoters by promoting cooperative binding between RFX and NF-Y.</title>
        <authorList>
            <person name="Villard J."/>
            <person name="Peretti M."/>
            <person name="Masternak K."/>
            <person name="Barras E."/>
            <person name="Caretti G."/>
            <person name="Mantovani R."/>
            <person name="Reith W."/>
        </authorList>
    </citation>
    <scope>NUCLEOTIDE SEQUENCE [MRNA]</scope>
    <scope>FUNCTION</scope>
    <scope>SUBUNIT</scope>
    <scope>SUBCELLULAR LOCATION</scope>
    <source>
        <strain>BALB/cJ</strain>
        <tissue>Spleen</tissue>
    </source>
</reference>
<reference key="2">
    <citation type="journal article" date="2009" name="PLoS Biol.">
        <title>Lineage-specific biology revealed by a finished genome assembly of the mouse.</title>
        <authorList>
            <person name="Church D.M."/>
            <person name="Goodstadt L."/>
            <person name="Hillier L.W."/>
            <person name="Zody M.C."/>
            <person name="Goldstein S."/>
            <person name="She X."/>
            <person name="Bult C.J."/>
            <person name="Agarwala R."/>
            <person name="Cherry J.L."/>
            <person name="DiCuccio M."/>
            <person name="Hlavina W."/>
            <person name="Kapustin Y."/>
            <person name="Meric P."/>
            <person name="Maglott D."/>
            <person name="Birtle Z."/>
            <person name="Marques A.C."/>
            <person name="Graves T."/>
            <person name="Zhou S."/>
            <person name="Teague B."/>
            <person name="Potamousis K."/>
            <person name="Churas C."/>
            <person name="Place M."/>
            <person name="Herschleb J."/>
            <person name="Runnheim R."/>
            <person name="Forrest D."/>
            <person name="Amos-Landgraf J."/>
            <person name="Schwartz D.C."/>
            <person name="Cheng Z."/>
            <person name="Lindblad-Toh K."/>
            <person name="Eichler E.E."/>
            <person name="Ponting C.P."/>
        </authorList>
    </citation>
    <scope>NUCLEOTIDE SEQUENCE [LARGE SCALE GENOMIC DNA]</scope>
    <source>
        <strain>C57BL/6J</strain>
    </source>
</reference>
<reference key="3">
    <citation type="submission" date="2005-07" db="EMBL/GenBank/DDBJ databases">
        <authorList>
            <person name="Mural R.J."/>
            <person name="Adams M.D."/>
            <person name="Myers E.W."/>
            <person name="Smith H.O."/>
            <person name="Venter J.C."/>
        </authorList>
    </citation>
    <scope>NUCLEOTIDE SEQUENCE [LARGE SCALE GENOMIC DNA]</scope>
</reference>
<reference key="4">
    <citation type="journal article" date="2004" name="Genome Res.">
        <title>The status, quality, and expansion of the NIH full-length cDNA project: the Mammalian Gene Collection (MGC).</title>
        <authorList>
            <consortium name="The MGC Project Team"/>
        </authorList>
    </citation>
    <scope>NUCLEOTIDE SEQUENCE [LARGE SCALE MRNA]</scope>
</reference>
<reference key="5">
    <citation type="journal article" date="2005" name="Science">
        <title>The transcriptional landscape of the mammalian genome.</title>
        <authorList>
            <person name="Carninci P."/>
            <person name="Kasukawa T."/>
            <person name="Katayama S."/>
            <person name="Gough J."/>
            <person name="Frith M.C."/>
            <person name="Maeda N."/>
            <person name="Oyama R."/>
            <person name="Ravasi T."/>
            <person name="Lenhard B."/>
            <person name="Wells C."/>
            <person name="Kodzius R."/>
            <person name="Shimokawa K."/>
            <person name="Bajic V.B."/>
            <person name="Brenner S.E."/>
            <person name="Batalov S."/>
            <person name="Forrest A.R."/>
            <person name="Zavolan M."/>
            <person name="Davis M.J."/>
            <person name="Wilming L.G."/>
            <person name="Aidinis V."/>
            <person name="Allen J.E."/>
            <person name="Ambesi-Impiombato A."/>
            <person name="Apweiler R."/>
            <person name="Aturaliya R.N."/>
            <person name="Bailey T.L."/>
            <person name="Bansal M."/>
            <person name="Baxter L."/>
            <person name="Beisel K.W."/>
            <person name="Bersano T."/>
            <person name="Bono H."/>
            <person name="Chalk A.M."/>
            <person name="Chiu K.P."/>
            <person name="Choudhary V."/>
            <person name="Christoffels A."/>
            <person name="Clutterbuck D.R."/>
            <person name="Crowe M.L."/>
            <person name="Dalla E."/>
            <person name="Dalrymple B.P."/>
            <person name="de Bono B."/>
            <person name="Della Gatta G."/>
            <person name="di Bernardo D."/>
            <person name="Down T."/>
            <person name="Engstrom P."/>
            <person name="Fagiolini M."/>
            <person name="Faulkner G."/>
            <person name="Fletcher C.F."/>
            <person name="Fukushima T."/>
            <person name="Furuno M."/>
            <person name="Futaki S."/>
            <person name="Gariboldi M."/>
            <person name="Georgii-Hemming P."/>
            <person name="Gingeras T.R."/>
            <person name="Gojobori T."/>
            <person name="Green R.E."/>
            <person name="Gustincich S."/>
            <person name="Harbers M."/>
            <person name="Hayashi Y."/>
            <person name="Hensch T.K."/>
            <person name="Hirokawa N."/>
            <person name="Hill D."/>
            <person name="Huminiecki L."/>
            <person name="Iacono M."/>
            <person name="Ikeo K."/>
            <person name="Iwama A."/>
            <person name="Ishikawa T."/>
            <person name="Jakt M."/>
            <person name="Kanapin A."/>
            <person name="Katoh M."/>
            <person name="Kawasawa Y."/>
            <person name="Kelso J."/>
            <person name="Kitamura H."/>
            <person name="Kitano H."/>
            <person name="Kollias G."/>
            <person name="Krishnan S.P."/>
            <person name="Kruger A."/>
            <person name="Kummerfeld S.K."/>
            <person name="Kurochkin I.V."/>
            <person name="Lareau L.F."/>
            <person name="Lazarevic D."/>
            <person name="Lipovich L."/>
            <person name="Liu J."/>
            <person name="Liuni S."/>
            <person name="McWilliam S."/>
            <person name="Madan Babu M."/>
            <person name="Madera M."/>
            <person name="Marchionni L."/>
            <person name="Matsuda H."/>
            <person name="Matsuzawa S."/>
            <person name="Miki H."/>
            <person name="Mignone F."/>
            <person name="Miyake S."/>
            <person name="Morris K."/>
            <person name="Mottagui-Tabar S."/>
            <person name="Mulder N."/>
            <person name="Nakano N."/>
            <person name="Nakauchi H."/>
            <person name="Ng P."/>
            <person name="Nilsson R."/>
            <person name="Nishiguchi S."/>
            <person name="Nishikawa S."/>
            <person name="Nori F."/>
            <person name="Ohara O."/>
            <person name="Okazaki Y."/>
            <person name="Orlando V."/>
            <person name="Pang K.C."/>
            <person name="Pavan W.J."/>
            <person name="Pavesi G."/>
            <person name="Pesole G."/>
            <person name="Petrovsky N."/>
            <person name="Piazza S."/>
            <person name="Reed J."/>
            <person name="Reid J.F."/>
            <person name="Ring B.Z."/>
            <person name="Ringwald M."/>
            <person name="Rost B."/>
            <person name="Ruan Y."/>
            <person name="Salzberg S.L."/>
            <person name="Sandelin A."/>
            <person name="Schneider C."/>
            <person name="Schoenbach C."/>
            <person name="Sekiguchi K."/>
            <person name="Semple C.A."/>
            <person name="Seno S."/>
            <person name="Sessa L."/>
            <person name="Sheng Y."/>
            <person name="Shibata Y."/>
            <person name="Shimada H."/>
            <person name="Shimada K."/>
            <person name="Silva D."/>
            <person name="Sinclair B."/>
            <person name="Sperling S."/>
            <person name="Stupka E."/>
            <person name="Sugiura K."/>
            <person name="Sultana R."/>
            <person name="Takenaka Y."/>
            <person name="Taki K."/>
            <person name="Tammoja K."/>
            <person name="Tan S.L."/>
            <person name="Tang S."/>
            <person name="Taylor M.S."/>
            <person name="Tegner J."/>
            <person name="Teichmann S.A."/>
            <person name="Ueda H.R."/>
            <person name="van Nimwegen E."/>
            <person name="Verardo R."/>
            <person name="Wei C.L."/>
            <person name="Yagi K."/>
            <person name="Yamanishi H."/>
            <person name="Zabarovsky E."/>
            <person name="Zhu S."/>
            <person name="Zimmer A."/>
            <person name="Hide W."/>
            <person name="Bult C."/>
            <person name="Grimmond S.M."/>
            <person name="Teasdale R.D."/>
            <person name="Liu E.T."/>
            <person name="Brusic V."/>
            <person name="Quackenbush J."/>
            <person name="Wahlestedt C."/>
            <person name="Mattick J.S."/>
            <person name="Hume D.A."/>
            <person name="Kai C."/>
            <person name="Sasaki D."/>
            <person name="Tomaru Y."/>
            <person name="Fukuda S."/>
            <person name="Kanamori-Katayama M."/>
            <person name="Suzuki M."/>
            <person name="Aoki J."/>
            <person name="Arakawa T."/>
            <person name="Iida J."/>
            <person name="Imamura K."/>
            <person name="Itoh M."/>
            <person name="Kato T."/>
            <person name="Kawaji H."/>
            <person name="Kawagashira N."/>
            <person name="Kawashima T."/>
            <person name="Kojima M."/>
            <person name="Kondo S."/>
            <person name="Konno H."/>
            <person name="Nakano K."/>
            <person name="Ninomiya N."/>
            <person name="Nishio T."/>
            <person name="Okada M."/>
            <person name="Plessy C."/>
            <person name="Shibata K."/>
            <person name="Shiraki T."/>
            <person name="Suzuki S."/>
            <person name="Tagami M."/>
            <person name="Waki K."/>
            <person name="Watahiki A."/>
            <person name="Okamura-Oho Y."/>
            <person name="Suzuki H."/>
            <person name="Kawai J."/>
            <person name="Hayashizaki Y."/>
        </authorList>
    </citation>
    <scope>NUCLEOTIDE SEQUENCE [LARGE SCALE MRNA] OF 454-658</scope>
    <source>
        <strain>NOD</strain>
        <tissue>Spleen</tissue>
    </source>
</reference>